<name>SYK_BORGP</name>
<gene>
    <name evidence="1" type="primary">lysS</name>
    <name type="synonym">lysK</name>
    <name type="ordered locus">BG0682</name>
</gene>
<keyword id="KW-0030">Aminoacyl-tRNA synthetase</keyword>
<keyword id="KW-0067">ATP-binding</keyword>
<keyword id="KW-0963">Cytoplasm</keyword>
<keyword id="KW-0436">Ligase</keyword>
<keyword id="KW-0547">Nucleotide-binding</keyword>
<keyword id="KW-0648">Protein biosynthesis</keyword>
<reference key="1">
    <citation type="submission" date="2001-10" db="EMBL/GenBank/DDBJ databases">
        <title>Differentiation of Borrelia burgdorferi sensu lato strains using class I lysyl-tRNA synthetase encoding genes.</title>
        <authorList>
            <person name="Ibba M."/>
        </authorList>
    </citation>
    <scope>NUCLEOTIDE SEQUENCE [GENOMIC DNA]</scope>
    <source>
        <strain>DK6</strain>
    </source>
</reference>
<reference key="2">
    <citation type="journal article" date="2004" name="Nucleic Acids Res.">
        <title>Comparative analysis of the Borrelia garinii genome.</title>
        <authorList>
            <person name="Gloeckner G."/>
            <person name="Lehmann R."/>
            <person name="Romualdi A."/>
            <person name="Pradella S."/>
            <person name="Schulte-Spechtel U."/>
            <person name="Schilhabel M."/>
            <person name="Wilske B."/>
            <person name="Suehnel J."/>
            <person name="Platzer M."/>
        </authorList>
    </citation>
    <scope>NUCLEOTIDE SEQUENCE [LARGE SCALE GENOMIC DNA]</scope>
    <source>
        <strain>ATCC BAA-2496 / DSM 23469 / PBi</strain>
    </source>
</reference>
<protein>
    <recommendedName>
        <fullName evidence="1">Lysine--tRNA ligase</fullName>
        <ecNumber evidence="1">6.1.1.6</ecNumber>
    </recommendedName>
    <alternativeName>
        <fullName evidence="1">Lysyl-tRNA synthetase</fullName>
        <shortName evidence="1">LysRS</shortName>
    </alternativeName>
</protein>
<dbReference type="EC" id="6.1.1.6" evidence="1"/>
<dbReference type="EMBL" id="AJ416852">
    <property type="protein sequence ID" value="CAC95161.1"/>
    <property type="molecule type" value="Genomic_DNA"/>
</dbReference>
<dbReference type="EMBL" id="CP000013">
    <property type="protein sequence ID" value="AAU07510.1"/>
    <property type="molecule type" value="Genomic_DNA"/>
</dbReference>
<dbReference type="RefSeq" id="WP_011193965.1">
    <property type="nucleotide sequence ID" value="NZ_CP028872.1"/>
</dbReference>
<dbReference type="SMR" id="Q937U7"/>
<dbReference type="GeneID" id="45161457"/>
<dbReference type="KEGG" id="bga:BG0682"/>
<dbReference type="eggNOG" id="COG1384">
    <property type="taxonomic scope" value="Bacteria"/>
</dbReference>
<dbReference type="HOGENOM" id="CLU_025562_1_0_12"/>
<dbReference type="OrthoDB" id="9803151at2"/>
<dbReference type="Proteomes" id="UP000002276">
    <property type="component" value="Chromosome"/>
</dbReference>
<dbReference type="GO" id="GO:0005737">
    <property type="term" value="C:cytoplasm"/>
    <property type="evidence" value="ECO:0007669"/>
    <property type="project" value="UniProtKB-SubCell"/>
</dbReference>
<dbReference type="GO" id="GO:0005524">
    <property type="term" value="F:ATP binding"/>
    <property type="evidence" value="ECO:0007669"/>
    <property type="project" value="UniProtKB-UniRule"/>
</dbReference>
<dbReference type="GO" id="GO:0004824">
    <property type="term" value="F:lysine-tRNA ligase activity"/>
    <property type="evidence" value="ECO:0007669"/>
    <property type="project" value="UniProtKB-UniRule"/>
</dbReference>
<dbReference type="GO" id="GO:0000049">
    <property type="term" value="F:tRNA binding"/>
    <property type="evidence" value="ECO:0007669"/>
    <property type="project" value="InterPro"/>
</dbReference>
<dbReference type="GO" id="GO:0006430">
    <property type="term" value="P:lysyl-tRNA aminoacylation"/>
    <property type="evidence" value="ECO:0007669"/>
    <property type="project" value="UniProtKB-UniRule"/>
</dbReference>
<dbReference type="CDD" id="cd00674">
    <property type="entry name" value="LysRS_core_class_I"/>
    <property type="match status" value="1"/>
</dbReference>
<dbReference type="Gene3D" id="1.10.10.350">
    <property type="match status" value="1"/>
</dbReference>
<dbReference type="Gene3D" id="1.10.10.770">
    <property type="match status" value="1"/>
</dbReference>
<dbReference type="Gene3D" id="3.40.50.620">
    <property type="entry name" value="HUPs"/>
    <property type="match status" value="2"/>
</dbReference>
<dbReference type="Gene3D" id="6.10.20.10">
    <property type="entry name" value="Lysine tRNA ligase, stem contact fold domain"/>
    <property type="match status" value="1"/>
</dbReference>
<dbReference type="HAMAP" id="MF_00177">
    <property type="entry name" value="Lys_tRNA_synth_class1"/>
    <property type="match status" value="1"/>
</dbReference>
<dbReference type="InterPro" id="IPR020751">
    <property type="entry name" value="aa-tRNA-synth_I_codon-bd_sub2"/>
</dbReference>
<dbReference type="InterPro" id="IPR001412">
    <property type="entry name" value="aa-tRNA-synth_I_CS"/>
</dbReference>
<dbReference type="InterPro" id="IPR008925">
    <property type="entry name" value="aa_tRNA-synth_I_cd-bd_sf"/>
</dbReference>
<dbReference type="InterPro" id="IPR002904">
    <property type="entry name" value="Lys-tRNA-ligase"/>
</dbReference>
<dbReference type="InterPro" id="IPR042078">
    <property type="entry name" value="Lys-tRNA-ligase_SC_fold"/>
</dbReference>
<dbReference type="InterPro" id="IPR014729">
    <property type="entry name" value="Rossmann-like_a/b/a_fold"/>
</dbReference>
<dbReference type="NCBIfam" id="TIGR00467">
    <property type="entry name" value="lysS_arch"/>
    <property type="match status" value="1"/>
</dbReference>
<dbReference type="PANTHER" id="PTHR37940">
    <property type="entry name" value="LYSINE--TRNA LIGASE"/>
    <property type="match status" value="1"/>
</dbReference>
<dbReference type="PANTHER" id="PTHR37940:SF1">
    <property type="entry name" value="LYSINE--TRNA LIGASE"/>
    <property type="match status" value="1"/>
</dbReference>
<dbReference type="Pfam" id="PF01921">
    <property type="entry name" value="tRNA-synt_1f"/>
    <property type="match status" value="1"/>
</dbReference>
<dbReference type="SUPFAM" id="SSF48163">
    <property type="entry name" value="An anticodon-binding domain of class I aminoacyl-tRNA synthetases"/>
    <property type="match status" value="1"/>
</dbReference>
<dbReference type="SUPFAM" id="SSF52374">
    <property type="entry name" value="Nucleotidylyl transferase"/>
    <property type="match status" value="1"/>
</dbReference>
<dbReference type="PROSITE" id="PS00178">
    <property type="entry name" value="AA_TRNA_LIGASE_I"/>
    <property type="match status" value="1"/>
</dbReference>
<comment type="catalytic activity">
    <reaction evidence="1">
        <text>tRNA(Lys) + L-lysine + ATP = L-lysyl-tRNA(Lys) + AMP + diphosphate</text>
        <dbReference type="Rhea" id="RHEA:20792"/>
        <dbReference type="Rhea" id="RHEA-COMP:9696"/>
        <dbReference type="Rhea" id="RHEA-COMP:9697"/>
        <dbReference type="ChEBI" id="CHEBI:30616"/>
        <dbReference type="ChEBI" id="CHEBI:32551"/>
        <dbReference type="ChEBI" id="CHEBI:33019"/>
        <dbReference type="ChEBI" id="CHEBI:78442"/>
        <dbReference type="ChEBI" id="CHEBI:78529"/>
        <dbReference type="ChEBI" id="CHEBI:456215"/>
        <dbReference type="EC" id="6.1.1.6"/>
    </reaction>
</comment>
<comment type="subcellular location">
    <subcellularLocation>
        <location evidence="1">Cytoplasm</location>
    </subcellularLocation>
</comment>
<comment type="similarity">
    <text evidence="1">Belongs to the class-I aminoacyl-tRNA synthetase family.</text>
</comment>
<sequence>MKTAHWADFYAEKIKKEKGPKNIYTVASGITPSGTVHIGNFREVISVDLVARALKDSGSQVRFIYSWDNYDVFRKVPKNMPEQELLTTYLRQAITRVPDTRGYKTSYARANEIEFEKYLPIVGINPEFIDQSKKYTNSTYASQIKFALNHKKELAEALNEYRTSKLEENWYPISIFCTKCNRDTTTVNNYDNHYSVKYSCECGNQESLDIRTTWAIKLPWRIDWPMRWKYEKVDFEPAGKDHHSSGGSFDTSKNIVKIFQGSPPVTFQYDFISIKGRGGKISSSLGDVISLKDVLEIYTPEVTRFLFAATKPNTEFSISFDLDVIKIYEDYDRFERIYYGVEDIKEEKKRSFKRIYELSQPYMPSKRIPYQIGFRHLSVICQIFENNINKILNYLKNVQDDQKDKLINKIKCVINWIKDFAPEDFKFLLRSKFDNIEILKEDNKKAISELLDSLKKNFEVATEQDIQNEIYKISRENNIEPALFFKQIYKILIDKEKGPKLAGFIKIIGIDRFEKIVSKYI</sequence>
<proteinExistence type="inferred from homology"/>
<accession>Q937U7</accession>
<accession>Q660L1</accession>
<evidence type="ECO:0000255" key="1">
    <source>
        <dbReference type="HAMAP-Rule" id="MF_00177"/>
    </source>
</evidence>
<evidence type="ECO:0000305" key="2"/>
<feature type="chain" id="PRO_0000152737" description="Lysine--tRNA ligase">
    <location>
        <begin position="1"/>
        <end position="521"/>
    </location>
</feature>
<feature type="short sequence motif" description="'HIGH' region">
    <location>
        <begin position="32"/>
        <end position="40"/>
    </location>
</feature>
<feature type="short sequence motif" description="'KMSKS' region">
    <location>
        <begin position="280"/>
        <end position="284"/>
    </location>
</feature>
<feature type="sequence conflict" description="In Ref. 1; CAC95161." evidence="2" ref="1">
    <original>I</original>
    <variation>V</variation>
    <location>
        <position position="297"/>
    </location>
</feature>
<organism>
    <name type="scientific">Borrelia garinii subsp. bavariensis (strain ATCC BAA-2496 / DSM 23469 / PBi)</name>
    <name type="common">Borreliella bavariensis</name>
    <dbReference type="NCBI Taxonomy" id="290434"/>
    <lineage>
        <taxon>Bacteria</taxon>
        <taxon>Pseudomonadati</taxon>
        <taxon>Spirochaetota</taxon>
        <taxon>Spirochaetia</taxon>
        <taxon>Spirochaetales</taxon>
        <taxon>Borreliaceae</taxon>
        <taxon>Borreliella</taxon>
    </lineage>
</organism>